<protein>
    <recommendedName>
        <fullName evidence="1">Large ribosomal subunit protein uL11</fullName>
    </recommendedName>
    <alternativeName>
        <fullName evidence="2">50S ribosomal protein L11</fullName>
    </alternativeName>
</protein>
<reference key="1">
    <citation type="journal article" date="2007" name="Proc. Natl. Acad. Sci. U.S.A.">
        <title>Genome and proteome of long-chain alkane degrading Geobacillus thermodenitrificans NG80-2 isolated from a deep-subsurface oil reservoir.</title>
        <authorList>
            <person name="Feng L."/>
            <person name="Wang W."/>
            <person name="Cheng J."/>
            <person name="Ren Y."/>
            <person name="Zhao G."/>
            <person name="Gao C."/>
            <person name="Tang Y."/>
            <person name="Liu X."/>
            <person name="Han W."/>
            <person name="Peng X."/>
            <person name="Liu R."/>
            <person name="Wang L."/>
        </authorList>
    </citation>
    <scope>NUCLEOTIDE SEQUENCE [LARGE SCALE GENOMIC DNA]</scope>
    <source>
        <strain>NG80-2</strain>
    </source>
</reference>
<accession>A4IJH6</accession>
<keyword id="KW-0488">Methylation</keyword>
<keyword id="KW-0687">Ribonucleoprotein</keyword>
<keyword id="KW-0689">Ribosomal protein</keyword>
<keyword id="KW-0694">RNA-binding</keyword>
<keyword id="KW-0699">rRNA-binding</keyword>
<organism>
    <name type="scientific">Geobacillus thermodenitrificans (strain NG80-2)</name>
    <dbReference type="NCBI Taxonomy" id="420246"/>
    <lineage>
        <taxon>Bacteria</taxon>
        <taxon>Bacillati</taxon>
        <taxon>Bacillota</taxon>
        <taxon>Bacilli</taxon>
        <taxon>Bacillales</taxon>
        <taxon>Anoxybacillaceae</taxon>
        <taxon>Geobacillus</taxon>
    </lineage>
</organism>
<name>RL11_GEOTN</name>
<proteinExistence type="inferred from homology"/>
<dbReference type="EMBL" id="CP000557">
    <property type="protein sequence ID" value="ABO65480.1"/>
    <property type="molecule type" value="Genomic_DNA"/>
</dbReference>
<dbReference type="RefSeq" id="WP_008882034.1">
    <property type="nucleotide sequence ID" value="NC_009328.1"/>
</dbReference>
<dbReference type="SMR" id="A4IJH6"/>
<dbReference type="GeneID" id="87622339"/>
<dbReference type="KEGG" id="gtn:GTNG_0093"/>
<dbReference type="eggNOG" id="COG0080">
    <property type="taxonomic scope" value="Bacteria"/>
</dbReference>
<dbReference type="HOGENOM" id="CLU_074237_2_1_9"/>
<dbReference type="Proteomes" id="UP000001578">
    <property type="component" value="Chromosome"/>
</dbReference>
<dbReference type="GO" id="GO:0022625">
    <property type="term" value="C:cytosolic large ribosomal subunit"/>
    <property type="evidence" value="ECO:0007669"/>
    <property type="project" value="TreeGrafter"/>
</dbReference>
<dbReference type="GO" id="GO:0070180">
    <property type="term" value="F:large ribosomal subunit rRNA binding"/>
    <property type="evidence" value="ECO:0007669"/>
    <property type="project" value="UniProtKB-UniRule"/>
</dbReference>
<dbReference type="GO" id="GO:0003735">
    <property type="term" value="F:structural constituent of ribosome"/>
    <property type="evidence" value="ECO:0007669"/>
    <property type="project" value="InterPro"/>
</dbReference>
<dbReference type="GO" id="GO:0006412">
    <property type="term" value="P:translation"/>
    <property type="evidence" value="ECO:0007669"/>
    <property type="project" value="UniProtKB-UniRule"/>
</dbReference>
<dbReference type="CDD" id="cd00349">
    <property type="entry name" value="Ribosomal_L11"/>
    <property type="match status" value="1"/>
</dbReference>
<dbReference type="FunFam" id="1.10.10.250:FF:000001">
    <property type="entry name" value="50S ribosomal protein L11"/>
    <property type="match status" value="1"/>
</dbReference>
<dbReference type="FunFam" id="3.30.1550.10:FF:000001">
    <property type="entry name" value="50S ribosomal protein L11"/>
    <property type="match status" value="1"/>
</dbReference>
<dbReference type="Gene3D" id="1.10.10.250">
    <property type="entry name" value="Ribosomal protein L11, C-terminal domain"/>
    <property type="match status" value="1"/>
</dbReference>
<dbReference type="Gene3D" id="3.30.1550.10">
    <property type="entry name" value="Ribosomal protein L11/L12, N-terminal domain"/>
    <property type="match status" value="1"/>
</dbReference>
<dbReference type="HAMAP" id="MF_00736">
    <property type="entry name" value="Ribosomal_uL11"/>
    <property type="match status" value="1"/>
</dbReference>
<dbReference type="InterPro" id="IPR000911">
    <property type="entry name" value="Ribosomal_uL11"/>
</dbReference>
<dbReference type="InterPro" id="IPR006519">
    <property type="entry name" value="Ribosomal_uL11_bac-typ"/>
</dbReference>
<dbReference type="InterPro" id="IPR020783">
    <property type="entry name" value="Ribosomal_uL11_C"/>
</dbReference>
<dbReference type="InterPro" id="IPR036769">
    <property type="entry name" value="Ribosomal_uL11_C_sf"/>
</dbReference>
<dbReference type="InterPro" id="IPR020785">
    <property type="entry name" value="Ribosomal_uL11_CS"/>
</dbReference>
<dbReference type="InterPro" id="IPR020784">
    <property type="entry name" value="Ribosomal_uL11_N"/>
</dbReference>
<dbReference type="InterPro" id="IPR036796">
    <property type="entry name" value="Ribosomal_uL11_N_sf"/>
</dbReference>
<dbReference type="NCBIfam" id="TIGR01632">
    <property type="entry name" value="L11_bact"/>
    <property type="match status" value="1"/>
</dbReference>
<dbReference type="PANTHER" id="PTHR11661">
    <property type="entry name" value="60S RIBOSOMAL PROTEIN L12"/>
    <property type="match status" value="1"/>
</dbReference>
<dbReference type="PANTHER" id="PTHR11661:SF1">
    <property type="entry name" value="LARGE RIBOSOMAL SUBUNIT PROTEIN UL11M"/>
    <property type="match status" value="1"/>
</dbReference>
<dbReference type="Pfam" id="PF00298">
    <property type="entry name" value="Ribosomal_L11"/>
    <property type="match status" value="1"/>
</dbReference>
<dbReference type="Pfam" id="PF03946">
    <property type="entry name" value="Ribosomal_L11_N"/>
    <property type="match status" value="1"/>
</dbReference>
<dbReference type="SMART" id="SM00649">
    <property type="entry name" value="RL11"/>
    <property type="match status" value="1"/>
</dbReference>
<dbReference type="SUPFAM" id="SSF54747">
    <property type="entry name" value="Ribosomal L11/L12e N-terminal domain"/>
    <property type="match status" value="1"/>
</dbReference>
<dbReference type="SUPFAM" id="SSF46906">
    <property type="entry name" value="Ribosomal protein L11, C-terminal domain"/>
    <property type="match status" value="1"/>
</dbReference>
<dbReference type="PROSITE" id="PS00359">
    <property type="entry name" value="RIBOSOMAL_L11"/>
    <property type="match status" value="1"/>
</dbReference>
<sequence>MAKKVIKIVKLQIPAGKANPAPPVGPALGQAGVNIMAFCKEFNARTADQAGLIIPVEITVFEDRSFTFITKTPPAAVLLKKAAGIESGSGEPNRNKVATIKRDKVREIAELKMPDLNAASIEAAMRMVEGTARSMGIVIED</sequence>
<feature type="chain" id="PRO_1000046183" description="Large ribosomal subunit protein uL11">
    <location>
        <begin position="1"/>
        <end position="141"/>
    </location>
</feature>
<gene>
    <name evidence="1" type="primary">rplK</name>
    <name type="ordered locus">GTNG_0093</name>
</gene>
<evidence type="ECO:0000255" key="1">
    <source>
        <dbReference type="HAMAP-Rule" id="MF_00736"/>
    </source>
</evidence>
<evidence type="ECO:0000305" key="2"/>
<comment type="function">
    <text evidence="1">Forms part of the ribosomal stalk which helps the ribosome interact with GTP-bound translation factors.</text>
</comment>
<comment type="subunit">
    <text evidence="1">Part of the ribosomal stalk of the 50S ribosomal subunit. Interacts with L10 and the large rRNA to form the base of the stalk. L10 forms an elongated spine to which L12 dimers bind in a sequential fashion forming a multimeric L10(L12)X complex.</text>
</comment>
<comment type="PTM">
    <text evidence="1">One or more lysine residues are methylated.</text>
</comment>
<comment type="similarity">
    <text evidence="1">Belongs to the universal ribosomal protein uL11 family.</text>
</comment>